<organism>
    <name type="scientific">Byssochlamys spectabilis</name>
    <name type="common">Paecilomyces variotii</name>
    <dbReference type="NCBI Taxonomy" id="264951"/>
    <lineage>
        <taxon>Eukaryota</taxon>
        <taxon>Fungi</taxon>
        <taxon>Dikarya</taxon>
        <taxon>Ascomycota</taxon>
        <taxon>Pezizomycotina</taxon>
        <taxon>Eurotiomycetes</taxon>
        <taxon>Eurotiomycetidae</taxon>
        <taxon>Eurotiales</taxon>
        <taxon>Thermoascaceae</taxon>
        <taxon>Paecilomyces</taxon>
    </lineage>
</organism>
<evidence type="ECO:0000255" key="1"/>
<evidence type="ECO:0000255" key="2">
    <source>
        <dbReference type="PROSITE-ProRule" id="PRU00258"/>
    </source>
</evidence>
<evidence type="ECO:0000255" key="3">
    <source>
        <dbReference type="PROSITE-ProRule" id="PRU01348"/>
    </source>
</evidence>
<evidence type="ECO:0000255" key="4">
    <source>
        <dbReference type="PROSITE-ProRule" id="PRU01363"/>
    </source>
</evidence>
<evidence type="ECO:0000255" key="5">
    <source>
        <dbReference type="PROSITE-ProRule" id="PRU10022"/>
    </source>
</evidence>
<evidence type="ECO:0000256" key="6">
    <source>
        <dbReference type="SAM" id="MobiDB-lite"/>
    </source>
</evidence>
<evidence type="ECO:0000269" key="7">
    <source>
    </source>
</evidence>
<evidence type="ECO:0000269" key="8">
    <source>
    </source>
</evidence>
<evidence type="ECO:0000303" key="9">
    <source>
    </source>
</evidence>
<evidence type="ECO:0000305" key="10">
    <source>
    </source>
</evidence>
<reference key="1">
    <citation type="journal article" date="2018" name="Front. Microbiol.">
        <title>Genomic and genetic insights into a cosmopolitan fungus, Paecilomyces variotii (Eurotiales).</title>
        <authorList>
            <person name="Urquhart A.S."/>
            <person name="Mondo S.J."/>
            <person name="Maekelae M.R."/>
            <person name="Hane J.K."/>
            <person name="Wiebenga A."/>
            <person name="He G."/>
            <person name="Mihaltcheva S."/>
            <person name="Pangilinan J."/>
            <person name="Lipzen A."/>
            <person name="Barry K."/>
            <person name="de Vries R.P."/>
            <person name="Grigoriev I.V."/>
            <person name="Idnurm A."/>
        </authorList>
    </citation>
    <scope>NUCLEOTIDE SEQUENCE [LARGE SCALE GENOMIC DNA]</scope>
    <source>
        <strain>ATCC 90900 / JCM 12815 / CBS 101075</strain>
    </source>
</reference>
<reference key="2">
    <citation type="journal article" date="2019" name="Fungal Biol. Biotechnol.">
        <title>The fungal gene cluster for biosynthesis of the antibacterial agent viriditoxin.</title>
        <authorList>
            <person name="Urquhart A.S."/>
            <person name="Hu J."/>
            <person name="Chooi Y.H."/>
            <person name="Idnurm A."/>
        </authorList>
    </citation>
    <scope>IDENTIFICATION</scope>
    <scope>FUNCTION</scope>
    <scope>DISRUPTION PHENOTYPE</scope>
    <scope>SUBCELLULAR LOCATION</scope>
    <scope>PATHWAY</scope>
</reference>
<reference key="3">
    <citation type="journal article" date="2019" name="J. Am. Chem. Soc.">
        <title>Fungal dirigent protein controls the stereoselectivity of multicopper oxidase-catalyzed phenol coupling in viriditoxin biosynthesis.</title>
        <authorList>
            <person name="Hu J."/>
            <person name="Li H."/>
            <person name="Chooi Y.H."/>
        </authorList>
    </citation>
    <scope>FUNCTION</scope>
    <scope>CATALYTIC ACTIVITY</scope>
    <scope>PATHWAY</scope>
</reference>
<gene>
    <name evidence="9" type="primary">VdtA</name>
    <name type="ORF">C8Q69DRAFT_480069</name>
</gene>
<protein>
    <recommendedName>
        <fullName evidence="9">Non-reducing polyketide synthase VdtA</fullName>
        <shortName evidence="9">PKS VdtA</shortName>
        <ecNumber evidence="7">2.3.1.-</ecNumber>
    </recommendedName>
    <alternativeName>
        <fullName evidence="9">Viriditoxin biosynthesis cluster protein A</fullName>
    </alternativeName>
</protein>
<sequence length="2276" mass="249146">MAQKLRFYLFGDQTYDYDEQLRALLTSHDPVVRSFLERAYYTLRAEVARIPNGYQARISRFSSIAELLSQRREHGVDASLEQALTVVYQLASFMRLHSERSLSYPSADDAHCLGLCTGALSAAAVSSSRSLSELLPAAIETVILAFRTGLHASDSGRRIEESSAAAKCWSISLQGLEGHVARKLLEEWSNKKRLPPMSRPYISAYASGGVTISGPPSVLAELRNTPGLSKLRAKDIPIHAPYHSSAIFNQCDVETILSSALIDLASRATHVPILSTGTGRLVWAGTLPAAIQSALQDVLLRPISWENMSCGISTCLQSIDPSEVEVIPIATLAGPLLCRSVQVAKSQIPATIDPKNDVMNEAQSQIAEAMDRAKIAIVGMSGRFPGAENVDSLWELLMAGRDMCKEVPPTRWNVDTHVDPTGKRKNTSKIRWGCWLDNPDMFDARFFNMSPREAPQVDPAQRIALITAYEAIEQAGIVPGRTPSTQEDRVGVFFGTTSNDWCESNSGQDIDTYYIPGANRAFIPGRINYVFKFSGPSYSIDTACSSSLSALHVACNALWHGDIDTAIAGGTNVLTNPDMTAGLDRGHFLSATGNCKTFDDTADGYCRGEGVATVVLKRMDDAIADKDPILGVIRGVYTNHSAEAESITRPHVGAQKAIFQHVLNHSGIRPQDISYIEMHGTGTQAGDMREMTSVLDTFSPQYPGAIQREKPLYLGAVKSNIGHGESVSGVTALVKVIMMMQNNTIPPHRGVHTRLNRRFPSNLDERNVHIAFQATEWPRGQTPRRAFINNFSAAGGNSSVLVEDPPLILKEEGADPRSSHVIAVSAKSPSALRKNLESMRRYAMSEHTEKSLCELSYTTTARRIHHSHRLMFAGSSLEDILREMESKLAIKEPFSPCAPLQSVIFTFTGQGAQYPGMGQVFFNNFSVFRSDLCRLDDLAQKLGFPTFLPIFSASTHARLEGFTPTVVQLANTCMQLALTRLWVSWGIRPSAVVGHSIGEYAALNTAGVLSDADTVYLVGKRAQLLEEKCNRGSHTMLAALASFEKVSRLLDSAPCEVACINGPEEIVLAGPRSHMTDIQKILVAHSIRCTMLQVPFAFHSSQVDPILQDFQSAIEGVTFHKPTIPVISPLLGDFVTETGTFNPNYLARHCREPVNILQALRQASTMNLVHDSSVVMEFGPHPVVSGMVKSTLGNSIKALPTLQRNRNTWEVLTESVSTLYCMGFDINWTEYHRDFPSSQRVLRLPSYSWDLKSYWIPYRNDWTLYKGDIVPESSIALPTHQNKPHSTSPKQQAPTPILETTTLHRIVDEKSTEGTFSITCESDVSRPDLSPLVQGHKVEGIGLCTPSVYADIGFTLGNYLLDRFPTRFGPDTKVVDVTDMVIEKALMPLNAGPQLLRVTASLIWSEKEASVRFYSVDENHTETVQHSHCRIKFSDRSTYQAYQEQISAVKARMFEMKTNSSSGRTYRFNGPMAYNMVQALAEFHPDYRCIDETILDNETLEAACTVSFGNVKKEGVFHTHPGYIDGLTQSGGFVMNANDKTNLGVEVFVNHGWDSFQLYEPVTDDRSYQTHVRMRPAESNQWKGDVVVLSGENLVACVRGLTIQGVPRRVLRYILQSSAKTTQTATSSVPAPSQAPVMVPQIVQVPKAKPISQISGTLTEALRIICEQSGVPLAELTDDATFANIGVDSLLALTITSAFVEELDLDVDSSLFMDYPTVADLKRFFDKINTQHAPAPAPVSDAPKQLQPSSSPVASATPSAPIHGRSKFESVLNILTEESGVEMAGLPDSTALADIGIDSLLSLVVTSRLNDELELDVSSEDFNDCLTIRDLKAHFMSKNSDNGSSAVLTPQPSRDSALPERTRPRVADTSDEEDAPVSANEFTTSARSTSKYMAVLNIISEESGMAIEDFTDNVMFADIGIDSLLSLVIGGRIREELSFDLEVDSLFVDYPDVKGLRSFFGFESNKTATNPTASQSSSSISSGTSVFDTSPSPTDLDILTPESSLSQEEFEQPLTIATKPLPPATSVTLQGLPSKAHKILFLFPDGSGSATSYAKLPRLGADVAIIGLNSPYLMDGANMTCTFDELVTLYLTEIQRRQPAGPYHLGGWSAGGILAYRAAQILQKAAANPQKPVVESLLLLDSPPPTGLGKLPKHFFDYCDQIGIFGQGTAKAPEWLITHFQGTNSVLHEYHATPFSFGTAPRTGIIWASQTVFETRAVAPPPVRPDDTEDMKFLTERRTDFSAGSWGHMFPGTEVLIETAYGADHFSLLVSLLFRD</sequence>
<proteinExistence type="evidence at protein level"/>
<accession>A0A443HK81</accession>
<feature type="chain" id="PRO_0000448341" description="Non-reducing polyketide synthase VdtA">
    <location>
        <begin position="1"/>
        <end position="2276"/>
    </location>
</feature>
<feature type="domain" description="Ketosynthase family 3 (KS3)" evidence="3">
    <location>
        <begin position="372"/>
        <end position="804"/>
    </location>
</feature>
<feature type="domain" description="PKS/mFAS DH" evidence="4">
    <location>
        <begin position="1304"/>
        <end position="1612"/>
    </location>
</feature>
<feature type="domain" description="Carrier 1" evidence="2">
    <location>
        <begin position="1655"/>
        <end position="1729"/>
    </location>
</feature>
<feature type="domain" description="Carrier 2" evidence="2">
    <location>
        <begin position="1765"/>
        <end position="1839"/>
    </location>
</feature>
<feature type="domain" description="Carrier 3" evidence="2">
    <location>
        <begin position="1886"/>
        <end position="1964"/>
    </location>
</feature>
<feature type="region of interest" description="N-terminal acylcarrier protein transacylase (SAT) domain" evidence="1">
    <location>
        <begin position="8"/>
        <end position="243"/>
    </location>
</feature>
<feature type="region of interest" description="Malonyl-CoA:ACP transacylase (MAT) domain" evidence="1">
    <location>
        <begin position="905"/>
        <end position="1206"/>
    </location>
</feature>
<feature type="region of interest" description="Product template (PT) domain" evidence="1">
    <location>
        <begin position="1300"/>
        <end position="1616"/>
    </location>
</feature>
<feature type="region of interest" description="N-terminal hotdog fold" evidence="4">
    <location>
        <begin position="1304"/>
        <end position="1438"/>
    </location>
</feature>
<feature type="region of interest" description="C-terminal hotdog fold" evidence="4">
    <location>
        <begin position="1465"/>
        <end position="1612"/>
    </location>
</feature>
<feature type="region of interest" description="Disordered" evidence="6">
    <location>
        <begin position="1735"/>
        <end position="1762"/>
    </location>
</feature>
<feature type="region of interest" description="Disordered" evidence="6">
    <location>
        <begin position="1840"/>
        <end position="1882"/>
    </location>
</feature>
<feature type="region of interest" description="Disordered" evidence="6">
    <location>
        <begin position="1967"/>
        <end position="1993"/>
    </location>
</feature>
<feature type="region of interest" description="Thioesterase (TE) domain" evidence="1">
    <location>
        <begin position="2020"/>
        <end position="2271"/>
    </location>
</feature>
<feature type="compositionally biased region" description="Low complexity" evidence="6">
    <location>
        <begin position="1748"/>
        <end position="1761"/>
    </location>
</feature>
<feature type="compositionally biased region" description="Polar residues" evidence="6">
    <location>
        <begin position="1840"/>
        <end position="1854"/>
    </location>
</feature>
<feature type="compositionally biased region" description="Basic and acidic residues" evidence="6">
    <location>
        <begin position="1857"/>
        <end position="1868"/>
    </location>
</feature>
<feature type="compositionally biased region" description="Low complexity" evidence="6">
    <location>
        <begin position="1969"/>
        <end position="1990"/>
    </location>
</feature>
<feature type="active site" description="For beta-ketoacyl synthase activity" evidence="3">
    <location>
        <position position="544"/>
    </location>
</feature>
<feature type="active site" description="For beta-ketoacyl synthase activity" evidence="3">
    <location>
        <position position="679"/>
    </location>
</feature>
<feature type="active site" description="For beta-ketoacyl synthase activity" evidence="3">
    <location>
        <position position="723"/>
    </location>
</feature>
<feature type="active site" description="For acyl/malonyl transferase activity" evidence="5">
    <location>
        <position position="996"/>
    </location>
</feature>
<feature type="active site" description="Proton acceptor; for dehydratase activity" evidence="4">
    <location>
        <position position="1336"/>
    </location>
</feature>
<feature type="active site" description="Proton donor; for dehydratase activity" evidence="4">
    <location>
        <position position="1525"/>
    </location>
</feature>
<feature type="modified residue" description="O-(pantetheine 4'-phosphoryl)serine" evidence="2">
    <location>
        <position position="1689"/>
    </location>
</feature>
<feature type="modified residue" description="O-(pantetheine 4'-phosphoryl)serine" evidence="2">
    <location>
        <position position="1799"/>
    </location>
</feature>
<feature type="modified residue" description="O-(pantetheine 4'-phosphoryl)serine" evidence="2">
    <location>
        <position position="1923"/>
    </location>
</feature>
<name>VDTA1_BYSSP</name>
<dbReference type="EC" id="2.3.1.-" evidence="7"/>
<dbReference type="EMBL" id="RCNU01000014">
    <property type="protein sequence ID" value="RWQ92175.1"/>
    <property type="molecule type" value="Genomic_DNA"/>
</dbReference>
<dbReference type="SMR" id="A0A443HK81"/>
<dbReference type="STRING" id="264951.A0A443HK81"/>
<dbReference type="ESTHER" id="byssp-vdta1">
    <property type="family name" value="Thioesterase"/>
</dbReference>
<dbReference type="VEuPathDB" id="FungiDB:C8Q69DRAFT_480069"/>
<dbReference type="Proteomes" id="UP000283841">
    <property type="component" value="Unassembled WGS sequence"/>
</dbReference>
<dbReference type="GO" id="GO:0031410">
    <property type="term" value="C:cytoplasmic vesicle"/>
    <property type="evidence" value="ECO:0000314"/>
    <property type="project" value="UniProt"/>
</dbReference>
<dbReference type="GO" id="GO:0004315">
    <property type="term" value="F:3-oxoacyl-[acyl-carrier-protein] synthase activity"/>
    <property type="evidence" value="ECO:0007669"/>
    <property type="project" value="InterPro"/>
</dbReference>
<dbReference type="GO" id="GO:0004312">
    <property type="term" value="F:fatty acid synthase activity"/>
    <property type="evidence" value="ECO:0007669"/>
    <property type="project" value="TreeGrafter"/>
</dbReference>
<dbReference type="GO" id="GO:0031177">
    <property type="term" value="F:phosphopantetheine binding"/>
    <property type="evidence" value="ECO:0007669"/>
    <property type="project" value="InterPro"/>
</dbReference>
<dbReference type="GO" id="GO:0016218">
    <property type="term" value="F:polyketide synthase activity"/>
    <property type="evidence" value="ECO:0000314"/>
    <property type="project" value="UniProt"/>
</dbReference>
<dbReference type="GO" id="GO:0140783">
    <property type="term" value="P:(M)-viriditoxin biosynthetic process"/>
    <property type="evidence" value="ECO:0000314"/>
    <property type="project" value="GO_Central"/>
</dbReference>
<dbReference type="GO" id="GO:0006633">
    <property type="term" value="P:fatty acid biosynthetic process"/>
    <property type="evidence" value="ECO:0007669"/>
    <property type="project" value="InterPro"/>
</dbReference>
<dbReference type="CDD" id="cd00833">
    <property type="entry name" value="PKS"/>
    <property type="match status" value="1"/>
</dbReference>
<dbReference type="FunFam" id="3.40.366.10:FF:000002">
    <property type="entry name" value="Probable polyketide synthase 2"/>
    <property type="match status" value="1"/>
</dbReference>
<dbReference type="FunFam" id="1.10.1200.10:FF:000011">
    <property type="entry name" value="Sterigmatocystin biosynthesis polyketide synthase"/>
    <property type="match status" value="1"/>
</dbReference>
<dbReference type="FunFam" id="3.10.129.110:FF:000001">
    <property type="entry name" value="Sterigmatocystin biosynthesis polyketide synthase"/>
    <property type="match status" value="1"/>
</dbReference>
<dbReference type="Gene3D" id="3.30.70.3290">
    <property type="match status" value="1"/>
</dbReference>
<dbReference type="Gene3D" id="3.40.47.10">
    <property type="match status" value="1"/>
</dbReference>
<dbReference type="Gene3D" id="1.10.1200.10">
    <property type="entry name" value="ACP-like"/>
    <property type="match status" value="3"/>
</dbReference>
<dbReference type="Gene3D" id="3.40.50.1820">
    <property type="entry name" value="alpha/beta hydrolase"/>
    <property type="match status" value="1"/>
</dbReference>
<dbReference type="Gene3D" id="3.40.366.10">
    <property type="entry name" value="Malonyl-Coenzyme A Acyl Carrier Protein, domain 2"/>
    <property type="match status" value="2"/>
</dbReference>
<dbReference type="Gene3D" id="3.10.129.110">
    <property type="entry name" value="Polyketide synthase dehydratase"/>
    <property type="match status" value="1"/>
</dbReference>
<dbReference type="InterPro" id="IPR029058">
    <property type="entry name" value="AB_hydrolase_fold"/>
</dbReference>
<dbReference type="InterPro" id="IPR001227">
    <property type="entry name" value="Ac_transferase_dom_sf"/>
</dbReference>
<dbReference type="InterPro" id="IPR036736">
    <property type="entry name" value="ACP-like_sf"/>
</dbReference>
<dbReference type="InterPro" id="IPR014043">
    <property type="entry name" value="Acyl_transferase_dom"/>
</dbReference>
<dbReference type="InterPro" id="IPR016035">
    <property type="entry name" value="Acyl_Trfase/lysoPLipase"/>
</dbReference>
<dbReference type="InterPro" id="IPR018201">
    <property type="entry name" value="Ketoacyl_synth_AS"/>
</dbReference>
<dbReference type="InterPro" id="IPR014031">
    <property type="entry name" value="Ketoacyl_synth_C"/>
</dbReference>
<dbReference type="InterPro" id="IPR014030">
    <property type="entry name" value="Ketoacyl_synth_N"/>
</dbReference>
<dbReference type="InterPro" id="IPR016036">
    <property type="entry name" value="Malonyl_transacylase_ACP-bd"/>
</dbReference>
<dbReference type="InterPro" id="IPR020841">
    <property type="entry name" value="PKS_Beta-ketoAc_synthase_dom"/>
</dbReference>
<dbReference type="InterPro" id="IPR042104">
    <property type="entry name" value="PKS_dehydratase_sf"/>
</dbReference>
<dbReference type="InterPro" id="IPR049551">
    <property type="entry name" value="PKS_DH_C"/>
</dbReference>
<dbReference type="InterPro" id="IPR049900">
    <property type="entry name" value="PKS_mFAS_DH"/>
</dbReference>
<dbReference type="InterPro" id="IPR050091">
    <property type="entry name" value="PKS_NRPS_Biosynth_Enz"/>
</dbReference>
<dbReference type="InterPro" id="IPR020806">
    <property type="entry name" value="PKS_PP-bd"/>
</dbReference>
<dbReference type="InterPro" id="IPR009081">
    <property type="entry name" value="PP-bd_ACP"/>
</dbReference>
<dbReference type="InterPro" id="IPR030918">
    <property type="entry name" value="PT_fungal_PKS"/>
</dbReference>
<dbReference type="InterPro" id="IPR032088">
    <property type="entry name" value="SAT"/>
</dbReference>
<dbReference type="InterPro" id="IPR001031">
    <property type="entry name" value="Thioesterase"/>
</dbReference>
<dbReference type="InterPro" id="IPR016039">
    <property type="entry name" value="Thiolase-like"/>
</dbReference>
<dbReference type="NCBIfam" id="TIGR04532">
    <property type="entry name" value="PT_fungal_PKS"/>
    <property type="match status" value="1"/>
</dbReference>
<dbReference type="PANTHER" id="PTHR43775">
    <property type="entry name" value="FATTY ACID SYNTHASE"/>
    <property type="match status" value="1"/>
</dbReference>
<dbReference type="PANTHER" id="PTHR43775:SF40">
    <property type="entry name" value="NORSOLORINIC ACID SYNTHASE STCA"/>
    <property type="match status" value="1"/>
</dbReference>
<dbReference type="Pfam" id="PF00698">
    <property type="entry name" value="Acyl_transf_1"/>
    <property type="match status" value="1"/>
</dbReference>
<dbReference type="Pfam" id="PF22621">
    <property type="entry name" value="CurL-like_PKS_C"/>
    <property type="match status" value="1"/>
</dbReference>
<dbReference type="Pfam" id="PF00109">
    <property type="entry name" value="ketoacyl-synt"/>
    <property type="match status" value="1"/>
</dbReference>
<dbReference type="Pfam" id="PF02801">
    <property type="entry name" value="Ketoacyl-synt_C"/>
    <property type="match status" value="1"/>
</dbReference>
<dbReference type="Pfam" id="PF00550">
    <property type="entry name" value="PP-binding"/>
    <property type="match status" value="3"/>
</dbReference>
<dbReference type="Pfam" id="PF14765">
    <property type="entry name" value="PS-DH"/>
    <property type="match status" value="1"/>
</dbReference>
<dbReference type="Pfam" id="PF16073">
    <property type="entry name" value="SAT"/>
    <property type="match status" value="1"/>
</dbReference>
<dbReference type="Pfam" id="PF00975">
    <property type="entry name" value="Thioesterase"/>
    <property type="match status" value="1"/>
</dbReference>
<dbReference type="SMART" id="SM00827">
    <property type="entry name" value="PKS_AT"/>
    <property type="match status" value="1"/>
</dbReference>
<dbReference type="SMART" id="SM00825">
    <property type="entry name" value="PKS_KS"/>
    <property type="match status" value="1"/>
</dbReference>
<dbReference type="SMART" id="SM00823">
    <property type="entry name" value="PKS_PP"/>
    <property type="match status" value="2"/>
</dbReference>
<dbReference type="SUPFAM" id="SSF47336">
    <property type="entry name" value="ACP-like"/>
    <property type="match status" value="3"/>
</dbReference>
<dbReference type="SUPFAM" id="SSF53474">
    <property type="entry name" value="alpha/beta-Hydrolases"/>
    <property type="match status" value="1"/>
</dbReference>
<dbReference type="SUPFAM" id="SSF52151">
    <property type="entry name" value="FabD/lysophospholipase-like"/>
    <property type="match status" value="2"/>
</dbReference>
<dbReference type="SUPFAM" id="SSF55048">
    <property type="entry name" value="Probable ACP-binding domain of malonyl-CoA ACP transacylase"/>
    <property type="match status" value="1"/>
</dbReference>
<dbReference type="SUPFAM" id="SSF53901">
    <property type="entry name" value="Thiolase-like"/>
    <property type="match status" value="1"/>
</dbReference>
<dbReference type="PROSITE" id="PS50075">
    <property type="entry name" value="CARRIER"/>
    <property type="match status" value="3"/>
</dbReference>
<dbReference type="PROSITE" id="PS00606">
    <property type="entry name" value="KS3_1"/>
    <property type="match status" value="1"/>
</dbReference>
<dbReference type="PROSITE" id="PS52004">
    <property type="entry name" value="KS3_2"/>
    <property type="match status" value="1"/>
</dbReference>
<dbReference type="PROSITE" id="PS52019">
    <property type="entry name" value="PKS_MFAS_DH"/>
    <property type="match status" value="1"/>
</dbReference>
<keyword id="KW-0968">Cytoplasmic vesicle</keyword>
<keyword id="KW-0511">Multifunctional enzyme</keyword>
<keyword id="KW-0596">Phosphopantetheine</keyword>
<keyword id="KW-0597">Phosphoprotein</keyword>
<keyword id="KW-1185">Reference proteome</keyword>
<keyword id="KW-0677">Repeat</keyword>
<keyword id="KW-0808">Transferase</keyword>
<comment type="function">
    <text evidence="7 8">Non-reducing polyketide synthase; part of the gene cluster that mediates the biosynthesis of viriditoxin, one of the 'classical' secondary metabolites produced by fungi and that has antibacterial activity (PubMed:31045362, PubMed:31304040). The first step is performed by the polyketide synthase VdtA which condenses one acetyl-CoA and 6 malonyl-CoA units to form the heptaketide monomer backbone of viriditoxin (PubMed:31304040). The product of VdtA is then O-methylated on C7 by the O-methyltransferase VdtC (PubMed:31045362, PubMed:31304040). The O-methyl group is important for the stereoselective coupling of the monomers at the final step of viriditoxin biosynthesis (PubMed:31045362, PubMed:31304040). The short-chain dehydrogenase/reductase VdtF then acts as a stereospecific reductase converting the pyrone to dihydropyrone via the reduction of the C3-C4 double bond (PubMed:31045362, PubMed:31304040). The FAD-binding monooxygenase VdtE then converts the ketone group into a methyl-ester group to yield semi-viriditoxin (PubMed:31045362, PubMed:31304040). Finally, the laccase VdtB is involved in dimerization of 2 semi-viriditoxin molecules to yield the final viriditoxin (PubMed:31045362, PubMed:31304040). VdtB is responsible for the regioselective 6,6'-coupling of semi-viriditoxin, which yields (M)-viriditoxin and (P)-viriditoxin at a ratio of 1:2 (PubMed:31045362, PubMed:31304040). The non-catalytic carboxylesterase-like protein VdtD affects the stereochemistical outcome of the coupling (PubMed:31045362, PubMed:31304040). The highly reducing polyketide synthase VdtX is not involved in viriditoxin synthesis, but might possibly play a role in the production of additional metabolites not identified yet (PubMed:31045362, PubMed:31304040).</text>
</comment>
<comment type="catalytic activity">
    <reaction evidence="7">
        <text>7 malonyl-CoA + acetyl-CoA + 7 H(+) = 7,9,10-trihydroxy-3-(2-oxopropyl)-1H-benzo[g]isochromen-1-one + 7 CO2 + 8 CoA + 2 H2O</text>
        <dbReference type="Rhea" id="RHEA:62860"/>
        <dbReference type="ChEBI" id="CHEBI:15377"/>
        <dbReference type="ChEBI" id="CHEBI:15378"/>
        <dbReference type="ChEBI" id="CHEBI:16526"/>
        <dbReference type="ChEBI" id="CHEBI:57287"/>
        <dbReference type="ChEBI" id="CHEBI:57288"/>
        <dbReference type="ChEBI" id="CHEBI:57384"/>
        <dbReference type="ChEBI" id="CHEBI:146009"/>
    </reaction>
    <physiologicalReaction direction="left-to-right" evidence="7">
        <dbReference type="Rhea" id="RHEA:62861"/>
    </physiologicalReaction>
</comment>
<comment type="pathway">
    <text evidence="7 8">Secondary metabolite biosynthesis.</text>
</comment>
<comment type="subcellular location">
    <subcellularLocation>
        <location evidence="8">Cytoplasmic vesicle</location>
    </subcellularLocation>
    <text evidence="8">The vesicles where VdtA is targeted remain unknown.</text>
</comment>
<comment type="domain">
    <text evidence="10">Multidomain protein; including a starter unit:ACP transacylase (SAT) that selects the starter unit; a ketosynthase (KS) that catalyzes repeated decarboxylative condensation to elongate the polyketide backbone; a malonyl-CoA:ACP transacylase (MAT) that selects and transfers the extender unit malonyl-CoA; a product template (PT) domain that controls the immediate cyclization regioselectivity of the reactive polyketide backbone; and 3 acyl-carrier protein (ACP) domains that serve as the tether of the growing and completed polyketide via its phosphopantetheinyl arm.</text>
</comment>
<comment type="disruption phenotype">
    <text evidence="8">Abolishes the production of viriditoxin.</text>
</comment>